<accession>Q756K9</accession>
<keyword id="KW-0963">Cytoplasm</keyword>
<keyword id="KW-0539">Nucleus</keyword>
<keyword id="KW-0653">Protein transport</keyword>
<keyword id="KW-1185">Reference proteome</keyword>
<keyword id="KW-0813">Transport</keyword>
<reference key="1">
    <citation type="journal article" date="2004" name="Science">
        <title>The Ashbya gossypii genome as a tool for mapping the ancient Saccharomyces cerevisiae genome.</title>
        <authorList>
            <person name="Dietrich F.S."/>
            <person name="Voegeli S."/>
            <person name="Brachat S."/>
            <person name="Lerch A."/>
            <person name="Gates K."/>
            <person name="Steiner S."/>
            <person name="Mohr C."/>
            <person name="Poehlmann R."/>
            <person name="Luedi P."/>
            <person name="Choi S."/>
            <person name="Wing R.A."/>
            <person name="Flavier A."/>
            <person name="Gaffney T.D."/>
            <person name="Philippsen P."/>
        </authorList>
    </citation>
    <scope>NUCLEOTIDE SEQUENCE [LARGE SCALE GENOMIC DNA]</scope>
    <source>
        <strain>ATCC 10895 / CBS 109.51 / FGSC 9923 / NRRL Y-1056</strain>
    </source>
</reference>
<reference key="2">
    <citation type="journal article" date="2013" name="G3 (Bethesda)">
        <title>Genomes of Ashbya fungi isolated from insects reveal four mating-type loci, numerous translocations, lack of transposons, and distinct gene duplications.</title>
        <authorList>
            <person name="Dietrich F.S."/>
            <person name="Voegeli S."/>
            <person name="Kuo S."/>
            <person name="Philippsen P."/>
        </authorList>
    </citation>
    <scope>GENOME REANNOTATION</scope>
    <source>
        <strain>ATCC 10895 / CBS 109.51 / FGSC 9923 / NRRL Y-1056</strain>
    </source>
</reference>
<evidence type="ECO:0000250" key="1"/>
<evidence type="ECO:0000250" key="2">
    <source>
        <dbReference type="UniProtKB" id="Q06338"/>
    </source>
</evidence>
<evidence type="ECO:0000256" key="3">
    <source>
        <dbReference type="SAM" id="MobiDB-lite"/>
    </source>
</evidence>
<evidence type="ECO:0000305" key="4"/>
<comment type="function">
    <text evidence="1">Involved in nuclear export, actin cytoskeleton organization and vesicular transport.</text>
</comment>
<comment type="subcellular location">
    <subcellularLocation>
        <location evidence="2">Cytoplasm</location>
    </subcellularLocation>
    <subcellularLocation>
        <location evidence="2">Nucleus</location>
    </subcellularLocation>
</comment>
<comment type="similarity">
    <text evidence="4">Belongs to the BCP1 family.</text>
</comment>
<feature type="chain" id="PRO_0000239627" description="Protein BCP1">
    <location>
        <begin position="1"/>
        <end position="271"/>
    </location>
</feature>
<feature type="region of interest" description="Disordered" evidence="3">
    <location>
        <begin position="1"/>
        <end position="37"/>
    </location>
</feature>
<organism>
    <name type="scientific">Eremothecium gossypii (strain ATCC 10895 / CBS 109.51 / FGSC 9923 / NRRL Y-1056)</name>
    <name type="common">Yeast</name>
    <name type="synonym">Ashbya gossypii</name>
    <dbReference type="NCBI Taxonomy" id="284811"/>
    <lineage>
        <taxon>Eukaryota</taxon>
        <taxon>Fungi</taxon>
        <taxon>Dikarya</taxon>
        <taxon>Ascomycota</taxon>
        <taxon>Saccharomycotina</taxon>
        <taxon>Saccharomycetes</taxon>
        <taxon>Saccharomycetales</taxon>
        <taxon>Saccharomycetaceae</taxon>
        <taxon>Eremothecium</taxon>
    </lineage>
</organism>
<gene>
    <name type="primary">BCP1</name>
    <name type="ordered locus">AER245C</name>
</gene>
<protein>
    <recommendedName>
        <fullName>Protein BCP1</fullName>
    </recommendedName>
</protein>
<proteinExistence type="inferred from homology"/>
<dbReference type="EMBL" id="AE016818">
    <property type="protein sequence ID" value="AAS52926.1"/>
    <property type="molecule type" value="Genomic_DNA"/>
</dbReference>
<dbReference type="RefSeq" id="NP_985102.1">
    <property type="nucleotide sequence ID" value="NM_210456.1"/>
</dbReference>
<dbReference type="SMR" id="Q756K9"/>
<dbReference type="FunCoup" id="Q756K9">
    <property type="interactions" value="1044"/>
</dbReference>
<dbReference type="STRING" id="284811.Q756K9"/>
<dbReference type="EnsemblFungi" id="AAS52926">
    <property type="protein sequence ID" value="AAS52926"/>
    <property type="gene ID" value="AGOS_AER245C"/>
</dbReference>
<dbReference type="GeneID" id="4621312"/>
<dbReference type="KEGG" id="ago:AGOS_AER245C"/>
<dbReference type="eggNOG" id="KOG3034">
    <property type="taxonomic scope" value="Eukaryota"/>
</dbReference>
<dbReference type="HOGENOM" id="CLU_068770_2_1_1"/>
<dbReference type="InParanoid" id="Q756K9"/>
<dbReference type="OMA" id="VKFYRKE"/>
<dbReference type="OrthoDB" id="27543at2759"/>
<dbReference type="Proteomes" id="UP000000591">
    <property type="component" value="Chromosome V"/>
</dbReference>
<dbReference type="GO" id="GO:0005737">
    <property type="term" value="C:cytoplasm"/>
    <property type="evidence" value="ECO:0007669"/>
    <property type="project" value="UniProtKB-SubCell"/>
</dbReference>
<dbReference type="GO" id="GO:0005634">
    <property type="term" value="C:nucleus"/>
    <property type="evidence" value="ECO:0000318"/>
    <property type="project" value="GO_Central"/>
</dbReference>
<dbReference type="GO" id="GO:0044183">
    <property type="term" value="F:protein folding chaperone"/>
    <property type="evidence" value="ECO:0007669"/>
    <property type="project" value="EnsemblFungi"/>
</dbReference>
<dbReference type="GO" id="GO:0006611">
    <property type="term" value="P:protein export from nucleus"/>
    <property type="evidence" value="ECO:0007669"/>
    <property type="project" value="EnsemblFungi"/>
</dbReference>
<dbReference type="GO" id="GO:0000055">
    <property type="term" value="P:ribosomal large subunit export from nucleus"/>
    <property type="evidence" value="ECO:0007669"/>
    <property type="project" value="EnsemblFungi"/>
</dbReference>
<dbReference type="InterPro" id="IPR025602">
    <property type="entry name" value="BCP1_family"/>
</dbReference>
<dbReference type="PANTHER" id="PTHR13261">
    <property type="entry name" value="BRCA2 AND CDKN1A INTERACTING PROTEIN"/>
    <property type="match status" value="1"/>
</dbReference>
<dbReference type="PANTHER" id="PTHR13261:SF0">
    <property type="entry name" value="BRCA2 AND CDKN1A-INTERACTING PROTEIN"/>
    <property type="match status" value="1"/>
</dbReference>
<dbReference type="Pfam" id="PF13862">
    <property type="entry name" value="BCCIP"/>
    <property type="match status" value="1"/>
</dbReference>
<dbReference type="PIRSF" id="PIRSF028983">
    <property type="entry name" value="BCP1"/>
    <property type="match status" value="1"/>
</dbReference>
<name>BCP1_EREGS</name>
<sequence>MVHAVKLSELSKRKRDVEEDSDVDISTTDSESDQDADGDEEIINIDFDFFNGNPGVDFHALKNLLRQLFGQQEANRMQLSTLADIILQSPTTTIKTDGQESDPYCFLSFVDYKEHRTSDYAKYLVNLDPRLETFFATIDNSDKTCALILCERLINMPVEVVPPLYNITLNDVSSNSSDGKHFDFYLVVSRKYEVSFDMDSDSEDESAKPRKRVKGSELDYFHEEDRHMEKYAKICFQGPTRKGVVPLYMVLDHEGLVRSIGDLEQAIASWK</sequence>